<sequence>MSKLRTEDMSHPVKPLRSFLIQDILSHMGPGSKEKSLGFPKTDQDQDSSLRDTEEKYASEKLQSSSQPAEIHHSHMEADENLELDTAQPITAVENKLAKQQQKRSRAAFSHSQVIELERKFSSQKYLSAPERAQLAKSLKLTETQVKIWFQNRRYKTKRKQLATDMEEVEKSSAHPAQCRDTNISRTSLLSFYQNYQRYPYLYYLAGWPAPLW</sequence>
<proteinExistence type="evidence at transcript level"/>
<protein>
    <recommendedName>
        <fullName>Homeobox protein koza</fullName>
    </recommendedName>
    <alternativeName>
        <fullName>Homeodomain transcription factor koza</fullName>
    </alternativeName>
</protein>
<gene>
    <name evidence="6" type="primary">koza</name>
</gene>
<dbReference type="EMBL" id="AF127225">
    <property type="protein sequence ID" value="AAD38901.1"/>
    <property type="molecule type" value="mRNA"/>
</dbReference>
<dbReference type="RefSeq" id="NP_001079169.1">
    <property type="nucleotide sequence ID" value="NM_001085700.1"/>
</dbReference>
<dbReference type="SMR" id="Q9W7E8"/>
<dbReference type="GeneID" id="373737"/>
<dbReference type="KEGG" id="xla:373737"/>
<dbReference type="AGR" id="Xenbase:XB-GENE-6252708"/>
<dbReference type="CTD" id="373737"/>
<dbReference type="Xenbase" id="XB-GENE-6252708">
    <property type="gene designation" value="nkx3-1.S"/>
</dbReference>
<dbReference type="OrthoDB" id="6159439at2759"/>
<dbReference type="Proteomes" id="UP000186698">
    <property type="component" value="Chromosome 3S"/>
</dbReference>
<dbReference type="Bgee" id="373737">
    <property type="expression patterns" value="Expressed in neurula embryo and 1 other cell type or tissue"/>
</dbReference>
<dbReference type="GO" id="GO:0005634">
    <property type="term" value="C:nucleus"/>
    <property type="evidence" value="ECO:0000318"/>
    <property type="project" value="GO_Central"/>
</dbReference>
<dbReference type="GO" id="GO:0003677">
    <property type="term" value="F:DNA binding"/>
    <property type="evidence" value="ECO:0000250"/>
    <property type="project" value="UniProtKB"/>
</dbReference>
<dbReference type="GO" id="GO:0000981">
    <property type="term" value="F:DNA-binding transcription factor activity, RNA polymerase II-specific"/>
    <property type="evidence" value="ECO:0000318"/>
    <property type="project" value="GO_Central"/>
</dbReference>
<dbReference type="GO" id="GO:0000978">
    <property type="term" value="F:RNA polymerase II cis-regulatory region sequence-specific DNA binding"/>
    <property type="evidence" value="ECO:0000318"/>
    <property type="project" value="GO_Central"/>
</dbReference>
<dbReference type="GO" id="GO:0030154">
    <property type="term" value="P:cell differentiation"/>
    <property type="evidence" value="ECO:0000318"/>
    <property type="project" value="GO_Central"/>
</dbReference>
<dbReference type="GO" id="GO:0045944">
    <property type="term" value="P:positive regulation of transcription by RNA polymerase II"/>
    <property type="evidence" value="ECO:0000250"/>
    <property type="project" value="UniProtKB"/>
</dbReference>
<dbReference type="GO" id="GO:0042127">
    <property type="term" value="P:regulation of cell population proliferation"/>
    <property type="evidence" value="ECO:0000315"/>
    <property type="project" value="UniProtKB"/>
</dbReference>
<dbReference type="GO" id="GO:0006357">
    <property type="term" value="P:regulation of transcription by RNA polymerase II"/>
    <property type="evidence" value="ECO:0000318"/>
    <property type="project" value="GO_Central"/>
</dbReference>
<dbReference type="CDD" id="cd00086">
    <property type="entry name" value="homeodomain"/>
    <property type="match status" value="1"/>
</dbReference>
<dbReference type="FunFam" id="1.10.10.60:FF:000338">
    <property type="entry name" value="Homeobox protein Nkx-3.1"/>
    <property type="match status" value="1"/>
</dbReference>
<dbReference type="Gene3D" id="1.10.10.60">
    <property type="entry name" value="Homeodomain-like"/>
    <property type="match status" value="1"/>
</dbReference>
<dbReference type="InterPro" id="IPR001356">
    <property type="entry name" value="HD"/>
</dbReference>
<dbReference type="InterPro" id="IPR020479">
    <property type="entry name" value="HD_metazoa"/>
</dbReference>
<dbReference type="InterPro" id="IPR017970">
    <property type="entry name" value="Homeobox_CS"/>
</dbReference>
<dbReference type="InterPro" id="IPR050394">
    <property type="entry name" value="Homeobox_NK-like"/>
</dbReference>
<dbReference type="InterPro" id="IPR009057">
    <property type="entry name" value="Homeodomain-like_sf"/>
</dbReference>
<dbReference type="PANTHER" id="PTHR24340">
    <property type="entry name" value="HOMEOBOX PROTEIN NKX"/>
    <property type="match status" value="1"/>
</dbReference>
<dbReference type="PANTHER" id="PTHR24340:SF38">
    <property type="entry name" value="HOMEOBOX PROTEIN NKX-3.1"/>
    <property type="match status" value="1"/>
</dbReference>
<dbReference type="Pfam" id="PF00046">
    <property type="entry name" value="Homeodomain"/>
    <property type="match status" value="1"/>
</dbReference>
<dbReference type="PRINTS" id="PR00024">
    <property type="entry name" value="HOMEOBOX"/>
</dbReference>
<dbReference type="SMART" id="SM00389">
    <property type="entry name" value="HOX"/>
    <property type="match status" value="1"/>
</dbReference>
<dbReference type="SUPFAM" id="SSF46689">
    <property type="entry name" value="Homeodomain-like"/>
    <property type="match status" value="1"/>
</dbReference>
<dbReference type="PROSITE" id="PS00027">
    <property type="entry name" value="HOMEOBOX_1"/>
    <property type="match status" value="1"/>
</dbReference>
<dbReference type="PROSITE" id="PS50071">
    <property type="entry name" value="HOMEOBOX_2"/>
    <property type="match status" value="1"/>
</dbReference>
<name>KOZA_XENLA</name>
<reference evidence="5 6" key="1">
    <citation type="journal article" date="2002" name="Dev. Dyn.">
        <title>Xenopus bagpipe-related gene, koza, may play a role in regulation of cell proliferation.</title>
        <authorList>
            <person name="Newman C.S."/>
            <person name="Krieg P.A."/>
        </authorList>
    </citation>
    <scope>NUCLEOTIDE SEQUENCE [MRNA]</scope>
    <scope>FUNCTION</scope>
    <scope>TISSUE SPECIFICITY</scope>
    <scope>DEVELOPMENTAL STAGE</scope>
    <scope>INDUCTION</scope>
    <source>
        <tissue evidence="4">Tadpole</tissue>
    </source>
</reference>
<organism>
    <name type="scientific">Xenopus laevis</name>
    <name type="common">African clawed frog</name>
    <dbReference type="NCBI Taxonomy" id="8355"/>
    <lineage>
        <taxon>Eukaryota</taxon>
        <taxon>Metazoa</taxon>
        <taxon>Chordata</taxon>
        <taxon>Craniata</taxon>
        <taxon>Vertebrata</taxon>
        <taxon>Euteleostomi</taxon>
        <taxon>Amphibia</taxon>
        <taxon>Batrachia</taxon>
        <taxon>Anura</taxon>
        <taxon>Pipoidea</taxon>
        <taxon>Pipidae</taxon>
        <taxon>Xenopodinae</taxon>
        <taxon>Xenopus</taxon>
        <taxon>Xenopus</taxon>
    </lineage>
</organism>
<keyword id="KW-0217">Developmental protein</keyword>
<keyword id="KW-0238">DNA-binding</keyword>
<keyword id="KW-0371">Homeobox</keyword>
<keyword id="KW-0539">Nucleus</keyword>
<keyword id="KW-1185">Reference proteome</keyword>
<feature type="chain" id="PRO_0000271785" description="Homeobox protein koza">
    <location>
        <begin position="1"/>
        <end position="213"/>
    </location>
</feature>
<feature type="DNA-binding region" description="Homeobox" evidence="2">
    <location>
        <begin position="102"/>
        <end position="161"/>
    </location>
</feature>
<feature type="region of interest" description="Disordered" evidence="3">
    <location>
        <begin position="24"/>
        <end position="72"/>
    </location>
</feature>
<feature type="compositionally biased region" description="Basic and acidic residues" evidence="3">
    <location>
        <begin position="32"/>
        <end position="59"/>
    </location>
</feature>
<accession>Q9W7E8</accession>
<comment type="function">
    <text evidence="4">May regulate cell proliferation in a tissue-specific manner.</text>
</comment>
<comment type="subcellular location">
    <subcellularLocation>
        <location evidence="5">Nucleus</location>
    </subcellularLocation>
</comment>
<comment type="tissue specificity">
    <text evidence="4">Expressed in the muscle layer of embryonic somites. In tailbud embryos, expressed throughout the entire myotome but at the mid-tailbud stage (stage 32), expression becomes restricted to the outer periphery of the somite so that by the tadpole stage only the outer, type I cells show expression. Also expressed in the dorsal cement gland and in the myocardial layer of the developing heart. In all tissues, expression begins after terminal differentiation.</text>
</comment>
<comment type="developmental stage">
    <text evidence="4">First detectable at low levels at the late gastrula/early neurula embryo (stage 14). Levels remain approximately constant throughout subsequent embryonic development, before declining in the tadpole.</text>
</comment>
<comment type="induction">
    <text evidence="4">By ihh/bhh.</text>
</comment>
<comment type="miscellaneous">
    <text evidence="4">Based on similarity to Drosophila 'bagpipe/bap', the name 'koza' was chosen after a Polish musical instrument related to the Scottish bagpipe.</text>
</comment>
<comment type="similarity">
    <text evidence="1">Belongs to the NK-3 homeobox family.</text>
</comment>
<evidence type="ECO:0000255" key="1"/>
<evidence type="ECO:0000255" key="2">
    <source>
        <dbReference type="PROSITE-ProRule" id="PRU00108"/>
    </source>
</evidence>
<evidence type="ECO:0000256" key="3">
    <source>
        <dbReference type="SAM" id="MobiDB-lite"/>
    </source>
</evidence>
<evidence type="ECO:0000269" key="4">
    <source>
    </source>
</evidence>
<evidence type="ECO:0000305" key="5"/>
<evidence type="ECO:0000312" key="6">
    <source>
        <dbReference type="EMBL" id="AAD38901.1"/>
    </source>
</evidence>